<sequence length="510" mass="58395">MDPHKKVALETEFFTEYGEASRYQIQEVIGKGSYGVVASAIDTHSGEKVAIKKINDVFEHVSDATRILREIKLLRLLRHPDIVEIKHVMLPPSRREFRDIYVVFELMESDLHQVIKANDDLTPEHYQFFLYQLLRGLKFIHTANVFHRDLKPKNILANSDCKLKICDFGLARVSFNDAPSAIFWTDYVATRWYRAPELCGSFFSKYTPAIDIWSIGCIFAEMLTGKPLFPGKNVVHQLDIMTDLLGTPPPEAIARIRNEKARRYLGNMRRKPPVPFTHKFPHVDPLALRLLHRLLAFDPKDRPSAEEALADPYFYGLANVDREPSTQPIPKLEFEFERRKITKEDVRELIYREILEYHPQMLQEYLRGGEQTSFMYPSGVDRFKRQFAHLEENYGKGEKGSPLQRQHASLPRERVPAPKKENGSHNHDIENRSIASLVTTLESPPTSQHEGSDYRNGTSQTGYSARSLLKSASISASKCIGMKPRNKSEYGESNNDTVDALSQKVAALHT</sequence>
<comment type="catalytic activity">
    <reaction>
        <text>L-seryl-[protein] + ATP = O-phospho-L-seryl-[protein] + ADP + H(+)</text>
        <dbReference type="Rhea" id="RHEA:17989"/>
        <dbReference type="Rhea" id="RHEA-COMP:9863"/>
        <dbReference type="Rhea" id="RHEA-COMP:11604"/>
        <dbReference type="ChEBI" id="CHEBI:15378"/>
        <dbReference type="ChEBI" id="CHEBI:29999"/>
        <dbReference type="ChEBI" id="CHEBI:30616"/>
        <dbReference type="ChEBI" id="CHEBI:83421"/>
        <dbReference type="ChEBI" id="CHEBI:456216"/>
        <dbReference type="EC" id="2.7.11.24"/>
    </reaction>
</comment>
<comment type="catalytic activity">
    <reaction>
        <text>L-threonyl-[protein] + ATP = O-phospho-L-threonyl-[protein] + ADP + H(+)</text>
        <dbReference type="Rhea" id="RHEA:46608"/>
        <dbReference type="Rhea" id="RHEA-COMP:11060"/>
        <dbReference type="Rhea" id="RHEA-COMP:11605"/>
        <dbReference type="ChEBI" id="CHEBI:15378"/>
        <dbReference type="ChEBI" id="CHEBI:30013"/>
        <dbReference type="ChEBI" id="CHEBI:30616"/>
        <dbReference type="ChEBI" id="CHEBI:61977"/>
        <dbReference type="ChEBI" id="CHEBI:456216"/>
        <dbReference type="EC" id="2.7.11.24"/>
    </reaction>
</comment>
<comment type="activity regulation">
    <text evidence="1">Activated by threonine and tyrosine phosphorylation.</text>
</comment>
<comment type="alternative products">
    <event type="alternative splicing"/>
    <isoform>
        <id>Q9LV37-1</id>
        <name>1</name>
        <sequence type="displayed"/>
    </isoform>
    <text>A number of isoforms are produced. According to EST sequences.</text>
</comment>
<comment type="domain">
    <text>The TXY motif contains the threonine and tyrosine residues whose phosphorylation activates the MAP kinases.</text>
</comment>
<comment type="PTM">
    <text evidence="1">Dually phosphorylated on Thr-185 and Tyr-187, which activates the enzyme.</text>
</comment>
<comment type="similarity">
    <text evidence="5">Belongs to the protein kinase superfamily. CMGC Ser/Thr protein kinase family. MAP kinase subfamily.</text>
</comment>
<comment type="sequence caution" evidence="5">
    <conflict type="erroneous initiation">
        <sequence resource="EMBL-CDS" id="BAB02016"/>
    </conflict>
</comment>
<feature type="chain" id="PRO_0000245809" description="Mitogen-activated protein kinase 9">
    <location>
        <begin position="1"/>
        <end position="510"/>
    </location>
</feature>
<feature type="domain" description="Protein kinase" evidence="3">
    <location>
        <begin position="23"/>
        <end position="314"/>
    </location>
</feature>
<feature type="region of interest" description="Disordered" evidence="4">
    <location>
        <begin position="393"/>
        <end position="461"/>
    </location>
</feature>
<feature type="short sequence motif" description="TXY">
    <location>
        <begin position="185"/>
        <end position="187"/>
    </location>
</feature>
<feature type="compositionally biased region" description="Basic and acidic residues" evidence="4">
    <location>
        <begin position="410"/>
        <end position="431"/>
    </location>
</feature>
<feature type="compositionally biased region" description="Polar residues" evidence="4">
    <location>
        <begin position="433"/>
        <end position="461"/>
    </location>
</feature>
<feature type="active site" description="Proton acceptor" evidence="3">
    <location>
        <position position="149"/>
    </location>
</feature>
<feature type="binding site" evidence="3">
    <location>
        <begin position="29"/>
        <end position="37"/>
    </location>
    <ligand>
        <name>ATP</name>
        <dbReference type="ChEBI" id="CHEBI:30616"/>
    </ligand>
</feature>
<feature type="binding site" evidence="3">
    <location>
        <position position="52"/>
    </location>
    <ligand>
        <name>ATP</name>
        <dbReference type="ChEBI" id="CHEBI:30616"/>
    </ligand>
</feature>
<feature type="modified residue" description="Phosphothreonine" evidence="2">
    <location>
        <position position="185"/>
    </location>
</feature>
<feature type="modified residue" description="Phosphotyrosine" evidence="2">
    <location>
        <position position="187"/>
    </location>
</feature>
<feature type="modified residue" description="Phosphothreonine" evidence="2">
    <location>
        <position position="190"/>
    </location>
</feature>
<feature type="sequence conflict" description="In Ref. 1; BAA92223." evidence="5" ref="1">
    <original>G</original>
    <variation>C</variation>
    <location>
        <position position="46"/>
    </location>
</feature>
<feature type="sequence conflict" description="In Ref. 1; BAA92223." evidence="5" ref="1">
    <original>I</original>
    <variation>S</variation>
    <location>
        <position position="54"/>
    </location>
</feature>
<feature type="sequence conflict" description="In Ref. 1; BAA92223." evidence="5" ref="1">
    <original>E</original>
    <variation>D</variation>
    <location>
        <position position="96"/>
    </location>
</feature>
<feature type="sequence conflict" description="In Ref. 1; BAA92223." evidence="5" ref="1">
    <original>T</original>
    <variation>N</variation>
    <location>
        <position position="190"/>
    </location>
</feature>
<feature type="sequence conflict" description="In Ref. 1; BAA92223." evidence="5" ref="1">
    <original>I</original>
    <variation>L</variation>
    <location>
        <position position="341"/>
    </location>
</feature>
<feature type="sequence conflict" description="In Ref. 1; BAA92223." evidence="5" ref="1">
    <original>T</original>
    <variation>Q</variation>
    <location>
        <position position="461"/>
    </location>
</feature>
<dbReference type="EC" id="2.7.11.24"/>
<dbReference type="EMBL" id="AB038694">
    <property type="protein sequence ID" value="BAA92223.1"/>
    <property type="molecule type" value="mRNA"/>
</dbReference>
<dbReference type="EMBL" id="AB020749">
    <property type="protein sequence ID" value="BAB02016.1"/>
    <property type="status" value="ALT_INIT"/>
    <property type="molecule type" value="Genomic_DNA"/>
</dbReference>
<dbReference type="EMBL" id="CP002686">
    <property type="protein sequence ID" value="AEE76038.1"/>
    <property type="molecule type" value="Genomic_DNA"/>
</dbReference>
<dbReference type="RefSeq" id="NP_001327298.1">
    <property type="nucleotide sequence ID" value="NM_001338320.1"/>
</dbReference>
<dbReference type="RefSeq" id="NP_566595.1">
    <molecule id="Q9LV37-1"/>
    <property type="nucleotide sequence ID" value="NM_112686.4"/>
</dbReference>
<dbReference type="SMR" id="Q9LV37"/>
<dbReference type="BioGRID" id="6662">
    <property type="interactions" value="2"/>
</dbReference>
<dbReference type="FunCoup" id="Q9LV37">
    <property type="interactions" value="623"/>
</dbReference>
<dbReference type="STRING" id="3702.Q9LV37"/>
<dbReference type="iPTMnet" id="Q9LV37"/>
<dbReference type="PaxDb" id="3702-AT3G18040.1"/>
<dbReference type="ProteomicsDB" id="250949">
    <molecule id="Q9LV37-1"/>
</dbReference>
<dbReference type="EnsemblPlants" id="AT3G18040.1">
    <molecule id="Q9LV37-1"/>
    <property type="protein sequence ID" value="AT3G18040.1"/>
    <property type="gene ID" value="AT3G18040"/>
</dbReference>
<dbReference type="GeneID" id="821329"/>
<dbReference type="Gramene" id="AT3G18040.1">
    <molecule id="Q9LV37-1"/>
    <property type="protein sequence ID" value="AT3G18040.1"/>
    <property type="gene ID" value="AT3G18040"/>
</dbReference>
<dbReference type="KEGG" id="ath:AT3G18040"/>
<dbReference type="Araport" id="AT3G18040"/>
<dbReference type="TAIR" id="AT3G18040">
    <property type="gene designation" value="MPK9"/>
</dbReference>
<dbReference type="eggNOG" id="KOG0660">
    <property type="taxonomic scope" value="Eukaryota"/>
</dbReference>
<dbReference type="HOGENOM" id="CLU_000288_181_5_1"/>
<dbReference type="InParanoid" id="Q9LV37"/>
<dbReference type="PhylomeDB" id="Q9LV37"/>
<dbReference type="PRO" id="PR:Q9LV37"/>
<dbReference type="Proteomes" id="UP000006548">
    <property type="component" value="Chromosome 3"/>
</dbReference>
<dbReference type="ExpressionAtlas" id="Q9LV37">
    <property type="expression patterns" value="baseline and differential"/>
</dbReference>
<dbReference type="GO" id="GO:0005829">
    <property type="term" value="C:cytosol"/>
    <property type="evidence" value="ECO:0000314"/>
    <property type="project" value="TAIR"/>
</dbReference>
<dbReference type="GO" id="GO:0005739">
    <property type="term" value="C:mitochondrion"/>
    <property type="evidence" value="ECO:0007005"/>
    <property type="project" value="TAIR"/>
</dbReference>
<dbReference type="GO" id="GO:0005634">
    <property type="term" value="C:nucleus"/>
    <property type="evidence" value="ECO:0000314"/>
    <property type="project" value="TAIR"/>
</dbReference>
<dbReference type="GO" id="GO:0005524">
    <property type="term" value="F:ATP binding"/>
    <property type="evidence" value="ECO:0007669"/>
    <property type="project" value="UniProtKB-KW"/>
</dbReference>
<dbReference type="GO" id="GO:0004707">
    <property type="term" value="F:MAP kinase activity"/>
    <property type="evidence" value="ECO:0000250"/>
    <property type="project" value="TAIR"/>
</dbReference>
<dbReference type="GO" id="GO:0106310">
    <property type="term" value="F:protein serine kinase activity"/>
    <property type="evidence" value="ECO:0007669"/>
    <property type="project" value="RHEA"/>
</dbReference>
<dbReference type="GO" id="GO:0009738">
    <property type="term" value="P:abscisic acid-activated signaling pathway"/>
    <property type="evidence" value="ECO:0000315"/>
    <property type="project" value="TAIR"/>
</dbReference>
<dbReference type="CDD" id="cd07859">
    <property type="entry name" value="STKc_TDY_MAPK"/>
    <property type="match status" value="1"/>
</dbReference>
<dbReference type="FunFam" id="1.10.510.10:FF:000017">
    <property type="entry name" value="Mitogen-activated protein kinase"/>
    <property type="match status" value="1"/>
</dbReference>
<dbReference type="FunFam" id="3.30.200.20:FF:000046">
    <property type="entry name" value="Mitogen-activated protein kinase"/>
    <property type="match status" value="1"/>
</dbReference>
<dbReference type="Gene3D" id="3.30.200.20">
    <property type="entry name" value="Phosphorylase Kinase, domain 1"/>
    <property type="match status" value="1"/>
</dbReference>
<dbReference type="Gene3D" id="1.10.510.10">
    <property type="entry name" value="Transferase(Phosphotransferase) domain 1"/>
    <property type="match status" value="1"/>
</dbReference>
<dbReference type="InterPro" id="IPR011009">
    <property type="entry name" value="Kinase-like_dom_sf"/>
</dbReference>
<dbReference type="InterPro" id="IPR050117">
    <property type="entry name" value="MAP_kinase"/>
</dbReference>
<dbReference type="InterPro" id="IPR003527">
    <property type="entry name" value="MAP_kinase_CS"/>
</dbReference>
<dbReference type="InterPro" id="IPR000719">
    <property type="entry name" value="Prot_kinase_dom"/>
</dbReference>
<dbReference type="InterPro" id="IPR017441">
    <property type="entry name" value="Protein_kinase_ATP_BS"/>
</dbReference>
<dbReference type="PANTHER" id="PTHR24055">
    <property type="entry name" value="MITOGEN-ACTIVATED PROTEIN KINASE"/>
    <property type="match status" value="1"/>
</dbReference>
<dbReference type="Pfam" id="PF00069">
    <property type="entry name" value="Pkinase"/>
    <property type="match status" value="1"/>
</dbReference>
<dbReference type="SMART" id="SM00220">
    <property type="entry name" value="S_TKc"/>
    <property type="match status" value="1"/>
</dbReference>
<dbReference type="SUPFAM" id="SSF56112">
    <property type="entry name" value="Protein kinase-like (PK-like)"/>
    <property type="match status" value="1"/>
</dbReference>
<dbReference type="PROSITE" id="PS01351">
    <property type="entry name" value="MAPK"/>
    <property type="match status" value="1"/>
</dbReference>
<dbReference type="PROSITE" id="PS00107">
    <property type="entry name" value="PROTEIN_KINASE_ATP"/>
    <property type="match status" value="1"/>
</dbReference>
<dbReference type="PROSITE" id="PS50011">
    <property type="entry name" value="PROTEIN_KINASE_DOM"/>
    <property type="match status" value="1"/>
</dbReference>
<protein>
    <recommendedName>
        <fullName>Mitogen-activated protein kinase 9</fullName>
        <shortName>AtMPK9</shortName>
        <shortName>MAP kinase 9</shortName>
        <ecNumber>2.7.11.24</ecNumber>
    </recommendedName>
</protein>
<proteinExistence type="evidence at transcript level"/>
<name>MPK9_ARATH</name>
<gene>
    <name type="primary">MPK9</name>
    <name type="ordered locus">At3g18040</name>
    <name type="ORF">MRC8.2</name>
    <name type="ORF">MRC8.4</name>
</gene>
<reference key="1">
    <citation type="submission" date="2000-02" db="EMBL/GenBank/DDBJ databases">
        <title>Arabidopsis thaliana mRNA for MAP kinase.</title>
        <authorList>
            <person name="Mizoguchi T."/>
            <person name="Ichimura K."/>
            <person name="Shinozaki K."/>
        </authorList>
    </citation>
    <scope>NUCLEOTIDE SEQUENCE [MRNA]</scope>
    <source>
        <strain>cv. Columbia</strain>
    </source>
</reference>
<reference key="2">
    <citation type="journal article" date="2000" name="DNA Res.">
        <title>Structural analysis of Arabidopsis thaliana chromosome 3. II. Sequence features of the 4,251,695 bp regions covered by 90 P1, TAC and BAC clones.</title>
        <authorList>
            <person name="Kaneko T."/>
            <person name="Katoh T."/>
            <person name="Sato S."/>
            <person name="Nakamura Y."/>
            <person name="Asamizu E."/>
            <person name="Tabata S."/>
        </authorList>
    </citation>
    <scope>NUCLEOTIDE SEQUENCE [LARGE SCALE GENOMIC DNA]</scope>
    <source>
        <strain>cv. Columbia</strain>
    </source>
</reference>
<reference key="3">
    <citation type="journal article" date="2017" name="Plant J.">
        <title>Araport11: a complete reannotation of the Arabidopsis thaliana reference genome.</title>
        <authorList>
            <person name="Cheng C.Y."/>
            <person name="Krishnakumar V."/>
            <person name="Chan A.P."/>
            <person name="Thibaud-Nissen F."/>
            <person name="Schobel S."/>
            <person name="Town C.D."/>
        </authorList>
    </citation>
    <scope>GENOME REANNOTATION</scope>
    <source>
        <strain>cv. Columbia</strain>
    </source>
</reference>
<reference key="4">
    <citation type="journal article" date="2002" name="Trends Plant Sci.">
        <title>Mitogen-activated protein kinase cascades in plants: a new nomenclature.</title>
        <authorList>
            <consortium name="MAPK group"/>
        </authorList>
    </citation>
    <scope>GENE FAMILY</scope>
    <scope>NOMENCLATURE</scope>
</reference>
<reference key="5">
    <citation type="journal article" date="2006" name="Trends Plant Sci.">
        <title>Ancient signals: comparative genomics of plant MAPK and MAPKK gene families.</title>
        <authorList>
            <person name="Hamel L.P."/>
            <person name="Nicole M.C."/>
            <person name="Sritubtim S."/>
            <person name="Morency M.J."/>
            <person name="Ellis M."/>
            <person name="Ehlting J."/>
            <person name="Beaudoin N."/>
            <person name="Barbazuk B."/>
            <person name="Klessig D."/>
            <person name="Lee J."/>
            <person name="Martin G."/>
            <person name="Mundy J."/>
            <person name="Ohashi Y."/>
            <person name="Scheel D."/>
            <person name="Sheen J."/>
            <person name="Xing T."/>
            <person name="Zhang S."/>
            <person name="Seguin A."/>
            <person name="Ellis B.E."/>
        </authorList>
    </citation>
    <scope>GENE FAMILY</scope>
</reference>
<organism>
    <name type="scientific">Arabidopsis thaliana</name>
    <name type="common">Mouse-ear cress</name>
    <dbReference type="NCBI Taxonomy" id="3702"/>
    <lineage>
        <taxon>Eukaryota</taxon>
        <taxon>Viridiplantae</taxon>
        <taxon>Streptophyta</taxon>
        <taxon>Embryophyta</taxon>
        <taxon>Tracheophyta</taxon>
        <taxon>Spermatophyta</taxon>
        <taxon>Magnoliopsida</taxon>
        <taxon>eudicotyledons</taxon>
        <taxon>Gunneridae</taxon>
        <taxon>Pentapetalae</taxon>
        <taxon>rosids</taxon>
        <taxon>malvids</taxon>
        <taxon>Brassicales</taxon>
        <taxon>Brassicaceae</taxon>
        <taxon>Camelineae</taxon>
        <taxon>Arabidopsis</taxon>
    </lineage>
</organism>
<accession>Q9LV37</accession>
<accession>Q9MB22</accession>
<keyword id="KW-0025">Alternative splicing</keyword>
<keyword id="KW-0067">ATP-binding</keyword>
<keyword id="KW-0418">Kinase</keyword>
<keyword id="KW-0547">Nucleotide-binding</keyword>
<keyword id="KW-0597">Phosphoprotein</keyword>
<keyword id="KW-1185">Reference proteome</keyword>
<keyword id="KW-0723">Serine/threonine-protein kinase</keyword>
<keyword id="KW-0808">Transferase</keyword>
<evidence type="ECO:0000250" key="1"/>
<evidence type="ECO:0000250" key="2">
    <source>
        <dbReference type="UniProtKB" id="Q39026"/>
    </source>
</evidence>
<evidence type="ECO:0000255" key="3">
    <source>
        <dbReference type="PROSITE-ProRule" id="PRU00159"/>
    </source>
</evidence>
<evidence type="ECO:0000256" key="4">
    <source>
        <dbReference type="SAM" id="MobiDB-lite"/>
    </source>
</evidence>
<evidence type="ECO:0000305" key="5"/>